<reference key="1">
    <citation type="journal article" date="1998" name="Science">
        <title>Genome sequence of the nematode C. elegans: a platform for investigating biology.</title>
        <authorList>
            <consortium name="The C. elegans sequencing consortium"/>
        </authorList>
    </citation>
    <scope>NUCLEOTIDE SEQUENCE [LARGE SCALE GENOMIC DNA]</scope>
    <scope>ALTERNATIVE SPLICING</scope>
    <source>
        <strain>Bristol N2</strain>
    </source>
</reference>
<reference key="2">
    <citation type="journal article" date="2003" name="Nat. Biotechnol.">
        <title>Lectin affinity capture, isotope-coded tagging and mass spectrometry to identify N-linked glycoproteins.</title>
        <authorList>
            <person name="Kaji H."/>
            <person name="Saito H."/>
            <person name="Yamauchi Y."/>
            <person name="Shinkawa T."/>
            <person name="Taoka M."/>
            <person name="Hirabayashi J."/>
            <person name="Kasai K."/>
            <person name="Takahashi N."/>
            <person name="Isobe T."/>
        </authorList>
    </citation>
    <scope>GLYCOSYLATION [LARGE SCALE ANALYSIS] AT ASN-126</scope>
    <scope>IDENTIFICATION BY MASS SPECTROMETRY</scope>
    <source>
        <strain>Bristol N2</strain>
    </source>
</reference>
<reference key="3">
    <citation type="journal article" date="2007" name="Mol. Cell. Proteomics">
        <title>Proteomics reveals N-linked glycoprotein diversity in Caenorhabditis elegans and suggests an atypical translocation mechanism for integral membrane proteins.</title>
        <authorList>
            <person name="Kaji H."/>
            <person name="Kamiie J."/>
            <person name="Kawakami H."/>
            <person name="Kido K."/>
            <person name="Yamauchi Y."/>
            <person name="Shinkawa T."/>
            <person name="Taoka M."/>
            <person name="Takahashi N."/>
            <person name="Isobe T."/>
        </authorList>
    </citation>
    <scope>GLYCOSYLATION [LARGE SCALE ANALYSIS] AT ASN-126</scope>
    <scope>IDENTIFICATION BY MASS SPECTROMETRY</scope>
    <source>
        <strain>Bristol N2</strain>
    </source>
</reference>
<comment type="subcellular location">
    <subcellularLocation>
        <location evidence="5">Membrane</location>
        <topology evidence="5">Single-pass type I membrane protein</topology>
    </subcellularLocation>
</comment>
<name>YC2BA_CAEEL</name>
<dbReference type="EMBL" id="FO080093">
    <property type="protein sequence ID" value="CCD61165.1"/>
    <property type="molecule type" value="Genomic_DNA"/>
</dbReference>
<dbReference type="PIR" id="T32590">
    <property type="entry name" value="T32590"/>
</dbReference>
<dbReference type="RefSeq" id="NP_500723.1">
    <property type="nucleotide sequence ID" value="NM_068322.6"/>
</dbReference>
<dbReference type="BioGRID" id="42410">
    <property type="interactions" value="1"/>
</dbReference>
<dbReference type="FunCoup" id="O44443">
    <property type="interactions" value="2"/>
</dbReference>
<dbReference type="STRING" id="6239.C02B10.3.1"/>
<dbReference type="iPTMnet" id="O44443"/>
<dbReference type="PaxDb" id="6239-C02B10.3"/>
<dbReference type="PeptideAtlas" id="O44443"/>
<dbReference type="EnsemblMetazoa" id="C02B10.3.1">
    <property type="protein sequence ID" value="C02B10.3.1"/>
    <property type="gene ID" value="WBGene00015328"/>
</dbReference>
<dbReference type="GeneID" id="177284"/>
<dbReference type="KEGG" id="cel:CELE_C02B10.3"/>
<dbReference type="UCSC" id="C02B10.3.1">
    <property type="organism name" value="c. elegans"/>
</dbReference>
<dbReference type="AGR" id="WB:WBGene00015328"/>
<dbReference type="CTD" id="177284"/>
<dbReference type="WormBase" id="C02B10.3">
    <property type="protein sequence ID" value="CE29018"/>
    <property type="gene ID" value="WBGene00015328"/>
</dbReference>
<dbReference type="eggNOG" id="KOG1225">
    <property type="taxonomic scope" value="Eukaryota"/>
</dbReference>
<dbReference type="HOGENOM" id="CLU_1262937_0_0_1"/>
<dbReference type="InParanoid" id="O44443"/>
<dbReference type="OMA" id="CRCADEY"/>
<dbReference type="OrthoDB" id="6130531at2759"/>
<dbReference type="PhylomeDB" id="O44443"/>
<dbReference type="PRO" id="PR:O44443"/>
<dbReference type="Proteomes" id="UP000001940">
    <property type="component" value="Chromosome IV"/>
</dbReference>
<dbReference type="Bgee" id="WBGene00015328">
    <property type="expression patterns" value="Expressed in pharyngeal muscle cell (C elegans) and 3 other cell types or tissues"/>
</dbReference>
<dbReference type="GO" id="GO:0005886">
    <property type="term" value="C:plasma membrane"/>
    <property type="evidence" value="ECO:0000318"/>
    <property type="project" value="GO_Central"/>
</dbReference>
<dbReference type="GO" id="GO:0005112">
    <property type="term" value="F:Notch binding"/>
    <property type="evidence" value="ECO:0000318"/>
    <property type="project" value="GO_Central"/>
</dbReference>
<dbReference type="GO" id="GO:0045746">
    <property type="term" value="P:negative regulation of Notch signaling pathway"/>
    <property type="evidence" value="ECO:0000318"/>
    <property type="project" value="GO_Central"/>
</dbReference>
<dbReference type="GO" id="GO:0007219">
    <property type="term" value="P:Notch signaling pathway"/>
    <property type="evidence" value="ECO:0000318"/>
    <property type="project" value="GO_Central"/>
</dbReference>
<dbReference type="Gene3D" id="2.10.25.10">
    <property type="entry name" value="Laminin"/>
    <property type="match status" value="1"/>
</dbReference>
<dbReference type="InterPro" id="IPR000742">
    <property type="entry name" value="EGF-like_dom"/>
</dbReference>
<dbReference type="SMART" id="SM00181">
    <property type="entry name" value="EGF"/>
    <property type="match status" value="2"/>
</dbReference>
<dbReference type="SUPFAM" id="SSF57196">
    <property type="entry name" value="EGF/Laminin"/>
    <property type="match status" value="1"/>
</dbReference>
<dbReference type="PROSITE" id="PS00022">
    <property type="entry name" value="EGF_1"/>
    <property type="match status" value="4"/>
</dbReference>
<dbReference type="PROSITE" id="PS01186">
    <property type="entry name" value="EGF_2"/>
    <property type="match status" value="2"/>
</dbReference>
<dbReference type="PROSITE" id="PS50026">
    <property type="entry name" value="EGF_3"/>
    <property type="match status" value="2"/>
</dbReference>
<protein>
    <recommendedName>
        <fullName>EGF-like domain-containing protein C02B10.3</fullName>
    </recommendedName>
</protein>
<proteinExistence type="evidence at protein level"/>
<gene>
    <name type="ORF">C02B10.3</name>
</gene>
<accession>O44443</accession>
<sequence length="247" mass="27307">MTGALCIVLFGVTMVTAERPKIKDTHGNLLVKLSDIPIGSCGDESYFGLGIMDGGLEECDRWKLEVTNPEYEEYKCKVLRVHASVQNGKCTCNINWKGPICNEYDGCGKGETLFGTSCTPHMCQHNGTIAVGKKEIECICPPPWDGRFCERLACWRKTISTQQHRYRNNGDHCICGNHYSGASCDVIKSCLNNGQLIDGKCKCPDGYYGDLCDKRCQKGHVTCSTCSSFIPAALFAIILLCVNKFNY</sequence>
<organism>
    <name type="scientific">Caenorhabditis elegans</name>
    <dbReference type="NCBI Taxonomy" id="6239"/>
    <lineage>
        <taxon>Eukaryota</taxon>
        <taxon>Metazoa</taxon>
        <taxon>Ecdysozoa</taxon>
        <taxon>Nematoda</taxon>
        <taxon>Chromadorea</taxon>
        <taxon>Rhabditida</taxon>
        <taxon>Rhabditina</taxon>
        <taxon>Rhabditomorpha</taxon>
        <taxon>Rhabditoidea</taxon>
        <taxon>Rhabditidae</taxon>
        <taxon>Peloderinae</taxon>
        <taxon>Caenorhabditis</taxon>
    </lineage>
</organism>
<keyword id="KW-1015">Disulfide bond</keyword>
<keyword id="KW-0245">EGF-like domain</keyword>
<keyword id="KW-0325">Glycoprotein</keyword>
<keyword id="KW-0472">Membrane</keyword>
<keyword id="KW-1185">Reference proteome</keyword>
<keyword id="KW-0677">Repeat</keyword>
<keyword id="KW-0732">Signal</keyword>
<keyword id="KW-0812">Transmembrane</keyword>
<keyword id="KW-1133">Transmembrane helix</keyword>
<evidence type="ECO:0000255" key="1"/>
<evidence type="ECO:0000255" key="2">
    <source>
        <dbReference type="PROSITE-ProRule" id="PRU00076"/>
    </source>
</evidence>
<evidence type="ECO:0000269" key="3">
    <source>
    </source>
</evidence>
<evidence type="ECO:0000269" key="4">
    <source>
    </source>
</evidence>
<evidence type="ECO:0000305" key="5"/>
<feature type="signal peptide" evidence="1">
    <location>
        <begin position="1"/>
        <end position="17"/>
    </location>
</feature>
<feature type="chain" id="PRO_0000248517" description="EGF-like domain-containing protein C02B10.3">
    <location>
        <begin position="18"/>
        <end position="247"/>
    </location>
</feature>
<feature type="topological domain" description="Extracellular" evidence="1">
    <location>
        <begin position="18"/>
        <end position="220"/>
    </location>
</feature>
<feature type="transmembrane region" description="Helical" evidence="1">
    <location>
        <begin position="221"/>
        <end position="240"/>
    </location>
</feature>
<feature type="topological domain" description="Cytoplasmic" evidence="1">
    <location>
        <begin position="241"/>
        <end position="247"/>
    </location>
</feature>
<feature type="domain" description="EGF-like 1" evidence="2">
    <location>
        <begin position="114"/>
        <end position="150"/>
    </location>
</feature>
<feature type="domain" description="EGF-like 2" evidence="2">
    <location>
        <begin position="180"/>
        <end position="213"/>
    </location>
</feature>
<feature type="glycosylation site" description="N-linked (GlcNAc...) asparagine" evidence="3 4">
    <location>
        <position position="126"/>
    </location>
</feature>
<feature type="disulfide bond" evidence="2">
    <location>
        <begin position="123"/>
        <end position="138"/>
    </location>
</feature>
<feature type="disulfide bond" evidence="2">
    <location>
        <begin position="140"/>
        <end position="149"/>
    </location>
</feature>
<feature type="disulfide bond" evidence="2">
    <location>
        <begin position="190"/>
        <end position="201"/>
    </location>
</feature>
<feature type="disulfide bond" evidence="2">
    <location>
        <begin position="203"/>
        <end position="212"/>
    </location>
</feature>